<feature type="signal peptide" evidence="2">
    <location>
        <begin position="1"/>
        <end position="23"/>
    </location>
</feature>
<feature type="chain" id="PRO_0000011700" description="Gonadotropin subunit beta-2">
    <location>
        <begin position="24"/>
        <end position="142"/>
    </location>
</feature>
<feature type="glycosylation site" description="N-linked (GlcNAc...) asparagine">
    <location>
        <position position="33"/>
    </location>
</feature>
<feature type="disulfide bond" evidence="1">
    <location>
        <begin position="29"/>
        <end position="77"/>
    </location>
</feature>
<feature type="disulfide bond" evidence="1">
    <location>
        <begin position="43"/>
        <end position="92"/>
    </location>
</feature>
<feature type="disulfide bond" evidence="1">
    <location>
        <begin position="46"/>
        <end position="130"/>
    </location>
</feature>
<feature type="disulfide bond" evidence="1">
    <location>
        <begin position="54"/>
        <end position="108"/>
    </location>
</feature>
<feature type="disulfide bond" evidence="1">
    <location>
        <begin position="58"/>
        <end position="110"/>
    </location>
</feature>
<feature type="disulfide bond" evidence="1">
    <location>
        <begin position="113"/>
        <end position="120"/>
    </location>
</feature>
<feature type="sequence variant">
    <original>Y</original>
    <variation>I</variation>
    <location>
        <position position="73"/>
    </location>
</feature>
<feature type="sequence variant">
    <original>T</original>
    <variation>K</variation>
    <location>
        <position position="86"/>
    </location>
</feature>
<gene>
    <name type="primary">cgbb</name>
</gene>
<reference key="1">
    <citation type="journal article" date="1989" name="Proc. Natl. Acad. Sci. U.S.A.">
        <title>Molecular cloning and sequence analysis of chum salmon gonadotropin cDNAs.</title>
        <authorList>
            <person name="Sekine S."/>
            <person name="Saito A."/>
            <person name="Itoh H."/>
            <person name="Kawauchi H."/>
            <person name="Itoh S."/>
        </authorList>
    </citation>
    <scope>NUCLEOTIDE SEQUENCE [MRNA]</scope>
</reference>
<reference key="2">
    <citation type="journal article" date="1988" name="Gen. Comp. Endocrinol.">
        <title>The complete amino acid sequences of beta-subunits of two distinct chum salmon GTHs.</title>
        <authorList>
            <person name="Itoh H."/>
            <person name="Suzuki K."/>
            <person name="Kawauchi H."/>
        </authorList>
    </citation>
    <scope>PROTEIN SEQUENCE OF 24-142</scope>
</reference>
<comment type="function">
    <text>Involved in gametogenesis and steroidogenesis.</text>
</comment>
<comment type="subunit">
    <text>Heterodimer of an alpha and a beta chain.</text>
</comment>
<comment type="subcellular location">
    <subcellularLocation>
        <location>Secreted</location>
    </subcellularLocation>
</comment>
<comment type="similarity">
    <text evidence="3">Belongs to the glycoprotein hormones subunit beta family.</text>
</comment>
<protein>
    <recommendedName>
        <fullName>Gonadotropin subunit beta-2</fullName>
    </recommendedName>
    <alternativeName>
        <fullName>GTH-II-beta</fullName>
    </alternativeName>
    <alternativeName>
        <fullName>Gonadotropin beta-II chain</fullName>
    </alternativeName>
</protein>
<accession>P10256</accession>
<name>GTHB2_ONCKE</name>
<evidence type="ECO:0000250" key="1"/>
<evidence type="ECO:0000269" key="2">
    <source>
    </source>
</evidence>
<evidence type="ECO:0000305" key="3"/>
<dbReference type="EMBL" id="M27154">
    <property type="protein sequence ID" value="AAA49409.1"/>
    <property type="molecule type" value="mRNA"/>
</dbReference>
<dbReference type="PIR" id="C36179">
    <property type="entry name" value="C36179"/>
</dbReference>
<dbReference type="SMR" id="P10256"/>
<dbReference type="GlyCosmos" id="P10256">
    <property type="glycosylation" value="1 site, No reported glycans"/>
</dbReference>
<dbReference type="OrthoDB" id="8453657at2759"/>
<dbReference type="GO" id="GO:0005737">
    <property type="term" value="C:cytoplasm"/>
    <property type="evidence" value="ECO:0007669"/>
    <property type="project" value="TreeGrafter"/>
</dbReference>
<dbReference type="GO" id="GO:0005615">
    <property type="term" value="C:extracellular space"/>
    <property type="evidence" value="ECO:0007669"/>
    <property type="project" value="TreeGrafter"/>
</dbReference>
<dbReference type="GO" id="GO:0005179">
    <property type="term" value="F:hormone activity"/>
    <property type="evidence" value="ECO:0007669"/>
    <property type="project" value="UniProtKB-KW"/>
</dbReference>
<dbReference type="GO" id="GO:0007186">
    <property type="term" value="P:G protein-coupled receptor signaling pathway"/>
    <property type="evidence" value="ECO:0007669"/>
    <property type="project" value="TreeGrafter"/>
</dbReference>
<dbReference type="CDD" id="cd00069">
    <property type="entry name" value="GHB_like"/>
    <property type="match status" value="1"/>
</dbReference>
<dbReference type="FunFam" id="2.10.90.10:FF:000007">
    <property type="entry name" value="Luteinizing hormone beta subunit"/>
    <property type="match status" value="1"/>
</dbReference>
<dbReference type="Gene3D" id="2.10.90.10">
    <property type="entry name" value="Cystine-knot cytokines"/>
    <property type="match status" value="1"/>
</dbReference>
<dbReference type="InterPro" id="IPR029034">
    <property type="entry name" value="Cystine-knot_cytokine"/>
</dbReference>
<dbReference type="InterPro" id="IPR006208">
    <property type="entry name" value="Glyco_hormone_CN"/>
</dbReference>
<dbReference type="InterPro" id="IPR001545">
    <property type="entry name" value="Gonadotropin_bsu"/>
</dbReference>
<dbReference type="InterPro" id="IPR018245">
    <property type="entry name" value="Gonadotropin_bsu_CS"/>
</dbReference>
<dbReference type="PANTHER" id="PTHR11515">
    <property type="entry name" value="GLYCOPROTEIN HORMONE BETA CHAIN"/>
    <property type="match status" value="1"/>
</dbReference>
<dbReference type="PANTHER" id="PTHR11515:SF11">
    <property type="entry name" value="LUTROPIN SUBUNIT BETA"/>
    <property type="match status" value="1"/>
</dbReference>
<dbReference type="Pfam" id="PF00007">
    <property type="entry name" value="Cys_knot"/>
    <property type="match status" value="1"/>
</dbReference>
<dbReference type="SMART" id="SM00068">
    <property type="entry name" value="GHB"/>
    <property type="match status" value="1"/>
</dbReference>
<dbReference type="SUPFAM" id="SSF57501">
    <property type="entry name" value="Cystine-knot cytokines"/>
    <property type="match status" value="1"/>
</dbReference>
<dbReference type="PROSITE" id="PS00261">
    <property type="entry name" value="GLYCO_HORMONE_BETA_1"/>
    <property type="match status" value="1"/>
</dbReference>
<dbReference type="PROSITE" id="PS00689">
    <property type="entry name" value="GLYCO_HORMONE_BETA_2"/>
    <property type="match status" value="1"/>
</dbReference>
<keyword id="KW-0903">Direct protein sequencing</keyword>
<keyword id="KW-1015">Disulfide bond</keyword>
<keyword id="KW-0325">Glycoprotein</keyword>
<keyword id="KW-0372">Hormone</keyword>
<keyword id="KW-0964">Secreted</keyword>
<keyword id="KW-0732">Signal</keyword>
<proteinExistence type="evidence at protein level"/>
<sequence length="142" mass="15872">MLGLHVGTLISLFLCILLEPVEGSLMQPCQPINQTVSLEKEGCPTCLVIQTPICSGHCVTKEPVFKSPFSTVYQHVCTYRDVRYETIRLPDCPPWVDPHVTYPVALSCDCSLCNMDTSDCTIESLQPDFCITQRVLTDGDMW</sequence>
<organism>
    <name type="scientific">Oncorhynchus keta</name>
    <name type="common">Chum salmon</name>
    <name type="synonym">Salmo keta</name>
    <dbReference type="NCBI Taxonomy" id="8018"/>
    <lineage>
        <taxon>Eukaryota</taxon>
        <taxon>Metazoa</taxon>
        <taxon>Chordata</taxon>
        <taxon>Craniata</taxon>
        <taxon>Vertebrata</taxon>
        <taxon>Euteleostomi</taxon>
        <taxon>Actinopterygii</taxon>
        <taxon>Neopterygii</taxon>
        <taxon>Teleostei</taxon>
        <taxon>Protacanthopterygii</taxon>
        <taxon>Salmoniformes</taxon>
        <taxon>Salmonidae</taxon>
        <taxon>Salmoninae</taxon>
        <taxon>Oncorhynchus</taxon>
    </lineage>
</organism>